<evidence type="ECO:0000255" key="1">
    <source>
        <dbReference type="PROSITE-ProRule" id="PRU00691"/>
    </source>
</evidence>
<evidence type="ECO:0000256" key="2">
    <source>
        <dbReference type="SAM" id="MobiDB-lite"/>
    </source>
</evidence>
<organism>
    <name type="scientific">Chlamydomonas reinhardtii</name>
    <name type="common">Chlamydomonas smithii</name>
    <dbReference type="NCBI Taxonomy" id="3055"/>
    <lineage>
        <taxon>Eukaryota</taxon>
        <taxon>Viridiplantae</taxon>
        <taxon>Chlorophyta</taxon>
        <taxon>core chlorophytes</taxon>
        <taxon>Chlorophyceae</taxon>
        <taxon>CS clade</taxon>
        <taxon>Chlamydomonadales</taxon>
        <taxon>Chlamydomonadaceae</taxon>
        <taxon>Chlamydomonas</taxon>
    </lineage>
</organism>
<comment type="function">
    <text>May be involved in regulating the redox state of functionally important thiol groups within dynein.</text>
</comment>
<comment type="subunit">
    <text>Consists of at least 3 heavy chains (alpha, beta and gamma), 2 intermediate chains and 8 light chains.</text>
</comment>
<comment type="subcellular location">
    <subcellularLocation>
        <location>Cell projection</location>
        <location>Cilium</location>
        <location>Flagellum</location>
    </subcellularLocation>
    <subcellularLocation>
        <location>Cytoplasm</location>
        <location>Cytoskeleton</location>
        <location>Flagellum axoneme</location>
    </subcellularLocation>
</comment>
<proteinExistence type="evidence at protein level"/>
<accession>Q39591</accession>
<reference key="1">
    <citation type="journal article" date="1996" name="J. Biol. Chem.">
        <title>Two functional thioredoxins containing redox-senesitive vicinal dithiols from the Chlamydomonas outer dynein arm.</title>
        <authorList>
            <person name="Patel-King R.S."/>
            <person name="Benashski S.E."/>
            <person name="Harrison A."/>
            <person name="King S.M."/>
        </authorList>
    </citation>
    <scope>NUCLEOTIDE SEQUENCE [MRNA]</scope>
    <scope>PROTEIN SEQUENCE OF 15-32 AND 58-65</scope>
    <source>
        <strain>1132D</strain>
    </source>
</reference>
<feature type="chain" id="PRO_0000120151" description="Dynein 14 kDa light chain, flagellar outer arm">
    <location>
        <begin position="1"/>
        <end position="129"/>
    </location>
</feature>
<feature type="domain" description="Thioredoxin" evidence="1">
    <location>
        <begin position="2"/>
        <end position="109"/>
    </location>
</feature>
<feature type="region of interest" description="Disordered" evidence="2">
    <location>
        <begin position="107"/>
        <end position="129"/>
    </location>
</feature>
<feature type="compositionally biased region" description="Low complexity" evidence="2">
    <location>
        <begin position="117"/>
        <end position="129"/>
    </location>
</feature>
<feature type="disulfide bond" description="Redox-active" evidence="1">
    <location>
        <begin position="34"/>
        <end position="37"/>
    </location>
</feature>
<sequence>MAFITEIANEAQWKTEVLETPGTLQVVEVFQSWCGPCKAVQSTFKKLYFDLNDRPLKFYSVSSERLSSLKEYVGKCKPIFLFFKDGKQVEKIEGVKAPQLNRIVTELSGKNPPPAAPAAAPAAPAAEAS</sequence>
<keyword id="KW-0002">3D-structure</keyword>
<keyword id="KW-0966">Cell projection</keyword>
<keyword id="KW-0969">Cilium</keyword>
<keyword id="KW-0963">Cytoplasm</keyword>
<keyword id="KW-0206">Cytoskeleton</keyword>
<keyword id="KW-0903">Direct protein sequencing</keyword>
<keyword id="KW-1015">Disulfide bond</keyword>
<keyword id="KW-0243">Dynein</keyword>
<keyword id="KW-0249">Electron transport</keyword>
<keyword id="KW-0282">Flagellum</keyword>
<keyword id="KW-0493">Microtubule</keyword>
<keyword id="KW-0505">Motor protein</keyword>
<keyword id="KW-0676">Redox-active center</keyword>
<keyword id="KW-0813">Transport</keyword>
<name>DYL4_CHLRE</name>
<protein>
    <recommendedName>
        <fullName>Dynein 14 kDa light chain, flagellar outer arm</fullName>
    </recommendedName>
</protein>
<dbReference type="EMBL" id="U43609">
    <property type="protein sequence ID" value="AAB03681.1"/>
    <property type="molecule type" value="mRNA"/>
</dbReference>
<dbReference type="PIR" id="T08084">
    <property type="entry name" value="T08084"/>
</dbReference>
<dbReference type="RefSeq" id="XP_001700453.1">
    <property type="nucleotide sequence ID" value="XM_001700401.2"/>
</dbReference>
<dbReference type="PDB" id="8GLV">
    <property type="method" value="EM"/>
    <property type="resolution" value="3.10 A"/>
    <property type="chains" value="DC/Dc/HB/Ly=1-129"/>
</dbReference>
<dbReference type="PDBsum" id="8GLV"/>
<dbReference type="EMDB" id="EMD-40220"/>
<dbReference type="SMR" id="Q39591"/>
<dbReference type="PaxDb" id="3055-EDO98142"/>
<dbReference type="EnsemblPlants" id="PNW70304">
    <property type="protein sequence ID" value="PNW70304"/>
    <property type="gene ID" value="CHLRE_17g714250v5"/>
</dbReference>
<dbReference type="GeneID" id="5725952"/>
<dbReference type="Gramene" id="PNW70304">
    <property type="protein sequence ID" value="PNW70304"/>
    <property type="gene ID" value="CHLRE_17g714250v5"/>
</dbReference>
<dbReference type="KEGG" id="cre:CHLRE_17g714250v5"/>
<dbReference type="eggNOG" id="KOG0907">
    <property type="taxonomic scope" value="Eukaryota"/>
</dbReference>
<dbReference type="HOGENOM" id="CLU_090389_14_4_1"/>
<dbReference type="OMA" id="WEEMLCL"/>
<dbReference type="OrthoDB" id="10263751at2759"/>
<dbReference type="GO" id="GO:0005737">
    <property type="term" value="C:cytoplasm"/>
    <property type="evidence" value="ECO:0007669"/>
    <property type="project" value="UniProtKB-KW"/>
</dbReference>
<dbReference type="GO" id="GO:0030286">
    <property type="term" value="C:dynein complex"/>
    <property type="evidence" value="ECO:0007669"/>
    <property type="project" value="UniProtKB-KW"/>
</dbReference>
<dbReference type="GO" id="GO:0005874">
    <property type="term" value="C:microtubule"/>
    <property type="evidence" value="ECO:0007669"/>
    <property type="project" value="UniProtKB-KW"/>
</dbReference>
<dbReference type="GO" id="GO:0031514">
    <property type="term" value="C:motile cilium"/>
    <property type="evidence" value="ECO:0007669"/>
    <property type="project" value="UniProtKB-SubCell"/>
</dbReference>
<dbReference type="CDD" id="cd02948">
    <property type="entry name" value="TRX_NDPK"/>
    <property type="match status" value="1"/>
</dbReference>
<dbReference type="Gene3D" id="3.40.30.10">
    <property type="entry name" value="Glutaredoxin"/>
    <property type="match status" value="1"/>
</dbReference>
<dbReference type="InterPro" id="IPR036249">
    <property type="entry name" value="Thioredoxin-like_sf"/>
</dbReference>
<dbReference type="InterPro" id="IPR017937">
    <property type="entry name" value="Thioredoxin_CS"/>
</dbReference>
<dbReference type="InterPro" id="IPR013766">
    <property type="entry name" value="Thioredoxin_domain"/>
</dbReference>
<dbReference type="InterPro" id="IPR051766">
    <property type="entry name" value="TXND_domain-containing"/>
</dbReference>
<dbReference type="PANTHER" id="PTHR46135">
    <property type="entry name" value="NME/NM23 FAMILY MEMBER 8"/>
    <property type="match status" value="1"/>
</dbReference>
<dbReference type="PANTHER" id="PTHR46135:SF3">
    <property type="entry name" value="NME_NM23 FAMILY MEMBER 8"/>
    <property type="match status" value="1"/>
</dbReference>
<dbReference type="Pfam" id="PF00085">
    <property type="entry name" value="Thioredoxin"/>
    <property type="match status" value="1"/>
</dbReference>
<dbReference type="SUPFAM" id="SSF52833">
    <property type="entry name" value="Thioredoxin-like"/>
    <property type="match status" value="1"/>
</dbReference>
<dbReference type="PROSITE" id="PS00194">
    <property type="entry name" value="THIOREDOXIN_1"/>
    <property type="match status" value="1"/>
</dbReference>
<dbReference type="PROSITE" id="PS51352">
    <property type="entry name" value="THIOREDOXIN_2"/>
    <property type="match status" value="1"/>
</dbReference>